<protein>
    <recommendedName>
        <fullName evidence="1">Essential MCU regulator, mitochondrial</fullName>
    </recommendedName>
    <alternativeName>
        <fullName evidence="7">Single-pass membrane protein with aspartate-rich tail 1, mitochondrial</fullName>
    </alternativeName>
</protein>
<evidence type="ECO:0000250" key="1">
    <source>
        <dbReference type="UniProtKB" id="Q9H4I9"/>
    </source>
</evidence>
<evidence type="ECO:0000255" key="2"/>
<evidence type="ECO:0000269" key="3">
    <source>
    </source>
</evidence>
<evidence type="ECO:0000269" key="4">
    <source>
    </source>
</evidence>
<evidence type="ECO:0000305" key="5"/>
<evidence type="ECO:0000305" key="6">
    <source>
    </source>
</evidence>
<evidence type="ECO:0000312" key="7">
    <source>
        <dbReference type="MGI" id="MGI:1916279"/>
    </source>
</evidence>
<gene>
    <name evidence="7" type="primary">Smdt1</name>
    <name evidence="1" type="synonym">Emre</name>
</gene>
<comment type="function">
    <text evidence="1 4">Essential regulatory subunit of the mitochondrial calcium uniporter complex (uniplex), a complex that mediates calcium uptake into mitochondria (PubMed:27001609). Required to bridge the calcium-sensing proteins MICU1 with the calcium-conducting subunit MCU (By similarity). Acts by mediating activation of MCU and retention of MICU1 to the MCU pore, in order to ensure tight regulation of the uniplex complex and appropriate responses to intracellular calcium signaling (By similarity).</text>
</comment>
<comment type="subunit">
    <text evidence="1 4">Component of the uniplex complex, composed of MCU, EMRE/SMDT1, MICU1 and MICU2 (or MICU3) in a 4:4:1:1 stoichiometry (PubMed:27001609). The number of EMRE/SMDT1 molecules is hovewer variable, ranging from 1 to 4 copies per uniplex complex, leading to uniplex complexes with distinct gatekeeping profiles (By similarity). Interacts (via its C-terminal poly-Asp tail) with MCUR1; the interaction is direct. Unprocessed form interacts (via transit peptide) with MAIP1 (By similarity).</text>
</comment>
<comment type="subcellular location">
    <subcellularLocation>
        <location evidence="4">Mitochondrion inner membrane</location>
        <topology evidence="1">Single-pass membrane protein</topology>
    </subcellularLocation>
    <text evidence="1">MAIP1 is required to assist sorting of EMRE/SMDT1 into mitochondrion by protecting EMRE/SMDT1 against protein degradation by YME1L1, thereby ensuring SMDT1/EMRE maturation by the mitochondrial processing peptidase (PMPCA and PMPCB).</text>
</comment>
<comment type="tissue specificity">
    <text evidence="3">Widely expressed.</text>
</comment>
<comment type="domain">
    <text evidence="1">The GXXXX[G/A/S] motif at the C-terminal part of the transmembrane region mediates interaction with MCU and is required to activate the calcium-conducting pore in the uniporter complex.</text>
</comment>
<comment type="domain">
    <text evidence="1">The poly-Asp region at the C-terminus mediates interaction with the polybasic region of MICU1.</text>
</comment>
<comment type="PTM">
    <text evidence="1">Undergoes proteolytic degradation in neurons: degraded by AFG3L2 and SPG7 before SMDT1/EMRE assembly with the uniporter complex, limiting the availability of SMDT1/EMRE for MCU assembly and promoting efficient assembly of gatekeeper subunits with MCU.</text>
</comment>
<comment type="similarity">
    <text evidence="5">Belongs to the SMDT1/EMRE family.</text>
</comment>
<comment type="sequence caution" evidence="5">
    <conflict type="frameshift">
        <sequence resource="EMBL-CDS" id="AAH92006"/>
    </conflict>
</comment>
<feature type="transit peptide" description="Mitochondrion" evidence="2">
    <location>
        <begin position="1"/>
        <end position="47"/>
    </location>
</feature>
<feature type="chain" id="PRO_0000296321" description="Essential MCU regulator, mitochondrial">
    <location>
        <begin position="48"/>
        <end position="107"/>
    </location>
</feature>
<feature type="topological domain" description="Mitochondrial matrix" evidence="6">
    <location>
        <begin position="48"/>
        <end position="65"/>
    </location>
</feature>
<feature type="transmembrane region" description="Helical" evidence="1">
    <location>
        <begin position="66"/>
        <end position="85"/>
    </location>
</feature>
<feature type="topological domain" description="Mitochondrial intermembrane" evidence="6">
    <location>
        <begin position="86"/>
        <end position="107"/>
    </location>
</feature>
<feature type="short sequence motif" description="GXXXX[G/A/S]" evidence="1">
    <location>
        <begin position="81"/>
        <end position="85"/>
    </location>
</feature>
<feature type="mutagenesis site" description="Abolishes calcium uptake into mitochondria. Abolishes interaction with MCU." evidence="4">
    <original>P</original>
    <variation>A</variation>
    <location>
        <position position="60"/>
    </location>
</feature>
<feature type="mutagenesis site" description="Abolishes calcium uptake into mitochondria. Abolishes interaction with MCU." evidence="4">
    <location>
        <begin position="85"/>
        <end position="90"/>
    </location>
</feature>
<accession>Q9DB10</accession>
<accession>Q58EA5</accession>
<keyword id="KW-0106">Calcium</keyword>
<keyword id="KW-0109">Calcium transport</keyword>
<keyword id="KW-0406">Ion transport</keyword>
<keyword id="KW-0472">Membrane</keyword>
<keyword id="KW-0496">Mitochondrion</keyword>
<keyword id="KW-0999">Mitochondrion inner membrane</keyword>
<keyword id="KW-1185">Reference proteome</keyword>
<keyword id="KW-0809">Transit peptide</keyword>
<keyword id="KW-0812">Transmembrane</keyword>
<keyword id="KW-1133">Transmembrane helix</keyword>
<keyword id="KW-0813">Transport</keyword>
<reference key="1">
    <citation type="journal article" date="2005" name="Science">
        <title>The transcriptional landscape of the mammalian genome.</title>
        <authorList>
            <person name="Carninci P."/>
            <person name="Kasukawa T."/>
            <person name="Katayama S."/>
            <person name="Gough J."/>
            <person name="Frith M.C."/>
            <person name="Maeda N."/>
            <person name="Oyama R."/>
            <person name="Ravasi T."/>
            <person name="Lenhard B."/>
            <person name="Wells C."/>
            <person name="Kodzius R."/>
            <person name="Shimokawa K."/>
            <person name="Bajic V.B."/>
            <person name="Brenner S.E."/>
            <person name="Batalov S."/>
            <person name="Forrest A.R."/>
            <person name="Zavolan M."/>
            <person name="Davis M.J."/>
            <person name="Wilming L.G."/>
            <person name="Aidinis V."/>
            <person name="Allen J.E."/>
            <person name="Ambesi-Impiombato A."/>
            <person name="Apweiler R."/>
            <person name="Aturaliya R.N."/>
            <person name="Bailey T.L."/>
            <person name="Bansal M."/>
            <person name="Baxter L."/>
            <person name="Beisel K.W."/>
            <person name="Bersano T."/>
            <person name="Bono H."/>
            <person name="Chalk A.M."/>
            <person name="Chiu K.P."/>
            <person name="Choudhary V."/>
            <person name="Christoffels A."/>
            <person name="Clutterbuck D.R."/>
            <person name="Crowe M.L."/>
            <person name="Dalla E."/>
            <person name="Dalrymple B.P."/>
            <person name="de Bono B."/>
            <person name="Della Gatta G."/>
            <person name="di Bernardo D."/>
            <person name="Down T."/>
            <person name="Engstrom P."/>
            <person name="Fagiolini M."/>
            <person name="Faulkner G."/>
            <person name="Fletcher C.F."/>
            <person name="Fukushima T."/>
            <person name="Furuno M."/>
            <person name="Futaki S."/>
            <person name="Gariboldi M."/>
            <person name="Georgii-Hemming P."/>
            <person name="Gingeras T.R."/>
            <person name="Gojobori T."/>
            <person name="Green R.E."/>
            <person name="Gustincich S."/>
            <person name="Harbers M."/>
            <person name="Hayashi Y."/>
            <person name="Hensch T.K."/>
            <person name="Hirokawa N."/>
            <person name="Hill D."/>
            <person name="Huminiecki L."/>
            <person name="Iacono M."/>
            <person name="Ikeo K."/>
            <person name="Iwama A."/>
            <person name="Ishikawa T."/>
            <person name="Jakt M."/>
            <person name="Kanapin A."/>
            <person name="Katoh M."/>
            <person name="Kawasawa Y."/>
            <person name="Kelso J."/>
            <person name="Kitamura H."/>
            <person name="Kitano H."/>
            <person name="Kollias G."/>
            <person name="Krishnan S.P."/>
            <person name="Kruger A."/>
            <person name="Kummerfeld S.K."/>
            <person name="Kurochkin I.V."/>
            <person name="Lareau L.F."/>
            <person name="Lazarevic D."/>
            <person name="Lipovich L."/>
            <person name="Liu J."/>
            <person name="Liuni S."/>
            <person name="McWilliam S."/>
            <person name="Madan Babu M."/>
            <person name="Madera M."/>
            <person name="Marchionni L."/>
            <person name="Matsuda H."/>
            <person name="Matsuzawa S."/>
            <person name="Miki H."/>
            <person name="Mignone F."/>
            <person name="Miyake S."/>
            <person name="Morris K."/>
            <person name="Mottagui-Tabar S."/>
            <person name="Mulder N."/>
            <person name="Nakano N."/>
            <person name="Nakauchi H."/>
            <person name="Ng P."/>
            <person name="Nilsson R."/>
            <person name="Nishiguchi S."/>
            <person name="Nishikawa S."/>
            <person name="Nori F."/>
            <person name="Ohara O."/>
            <person name="Okazaki Y."/>
            <person name="Orlando V."/>
            <person name="Pang K.C."/>
            <person name="Pavan W.J."/>
            <person name="Pavesi G."/>
            <person name="Pesole G."/>
            <person name="Petrovsky N."/>
            <person name="Piazza S."/>
            <person name="Reed J."/>
            <person name="Reid J.F."/>
            <person name="Ring B.Z."/>
            <person name="Ringwald M."/>
            <person name="Rost B."/>
            <person name="Ruan Y."/>
            <person name="Salzberg S.L."/>
            <person name="Sandelin A."/>
            <person name="Schneider C."/>
            <person name="Schoenbach C."/>
            <person name="Sekiguchi K."/>
            <person name="Semple C.A."/>
            <person name="Seno S."/>
            <person name="Sessa L."/>
            <person name="Sheng Y."/>
            <person name="Shibata Y."/>
            <person name="Shimada H."/>
            <person name="Shimada K."/>
            <person name="Silva D."/>
            <person name="Sinclair B."/>
            <person name="Sperling S."/>
            <person name="Stupka E."/>
            <person name="Sugiura K."/>
            <person name="Sultana R."/>
            <person name="Takenaka Y."/>
            <person name="Taki K."/>
            <person name="Tammoja K."/>
            <person name="Tan S.L."/>
            <person name="Tang S."/>
            <person name="Taylor M.S."/>
            <person name="Tegner J."/>
            <person name="Teichmann S.A."/>
            <person name="Ueda H.R."/>
            <person name="van Nimwegen E."/>
            <person name="Verardo R."/>
            <person name="Wei C.L."/>
            <person name="Yagi K."/>
            <person name="Yamanishi H."/>
            <person name="Zabarovsky E."/>
            <person name="Zhu S."/>
            <person name="Zimmer A."/>
            <person name="Hide W."/>
            <person name="Bult C."/>
            <person name="Grimmond S.M."/>
            <person name="Teasdale R.D."/>
            <person name="Liu E.T."/>
            <person name="Brusic V."/>
            <person name="Quackenbush J."/>
            <person name="Wahlestedt C."/>
            <person name="Mattick J.S."/>
            <person name="Hume D.A."/>
            <person name="Kai C."/>
            <person name="Sasaki D."/>
            <person name="Tomaru Y."/>
            <person name="Fukuda S."/>
            <person name="Kanamori-Katayama M."/>
            <person name="Suzuki M."/>
            <person name="Aoki J."/>
            <person name="Arakawa T."/>
            <person name="Iida J."/>
            <person name="Imamura K."/>
            <person name="Itoh M."/>
            <person name="Kato T."/>
            <person name="Kawaji H."/>
            <person name="Kawagashira N."/>
            <person name="Kawashima T."/>
            <person name="Kojima M."/>
            <person name="Kondo S."/>
            <person name="Konno H."/>
            <person name="Nakano K."/>
            <person name="Ninomiya N."/>
            <person name="Nishio T."/>
            <person name="Okada M."/>
            <person name="Plessy C."/>
            <person name="Shibata K."/>
            <person name="Shiraki T."/>
            <person name="Suzuki S."/>
            <person name="Tagami M."/>
            <person name="Waki K."/>
            <person name="Watahiki A."/>
            <person name="Okamura-Oho Y."/>
            <person name="Suzuki H."/>
            <person name="Kawai J."/>
            <person name="Hayashizaki Y."/>
        </authorList>
    </citation>
    <scope>NUCLEOTIDE SEQUENCE [LARGE SCALE MRNA]</scope>
    <source>
        <strain>C57BL/6J</strain>
        <strain>NOD</strain>
        <tissue>Cerebellum</tissue>
    </source>
</reference>
<reference key="2">
    <citation type="journal article" date="2004" name="Genome Res.">
        <title>The status, quality, and expansion of the NIH full-length cDNA project: the Mammalian Gene Collection (MGC).</title>
        <authorList>
            <consortium name="The MGC Project Team"/>
        </authorList>
    </citation>
    <scope>NUCLEOTIDE SEQUENCE [LARGE SCALE MRNA]</scope>
    <source>
        <strain>C57BL/6J</strain>
        <tissue>Brain</tissue>
        <tissue>Mammary gland</tissue>
    </source>
</reference>
<reference key="3">
    <citation type="journal article" date="2013" name="Science">
        <title>EMRE is an essential component of the mitochondrial calcium uniporter complex.</title>
        <authorList>
            <person name="Sancak Y."/>
            <person name="Markhard A.L."/>
            <person name="Kitami T."/>
            <person name="Kovacs-Bogdan E."/>
            <person name="Kamer K.J."/>
            <person name="Udeshi N.D."/>
            <person name="Carr S.A."/>
            <person name="Chaudhuri D."/>
            <person name="Clapham D.E."/>
            <person name="Li A.A."/>
            <person name="Calvo S.E."/>
            <person name="Goldberger O."/>
            <person name="Mootha V.K."/>
        </authorList>
    </citation>
    <scope>TISSUE SPECIFICITY</scope>
</reference>
<reference key="4">
    <citation type="journal article" date="2016" name="Biochim. Biophys. Acta">
        <title>Analysis of the structure and function of EMRE in a yeast expression system.</title>
        <authorList>
            <person name="Yamamoto T."/>
            <person name="Yamagoshi R."/>
            <person name="Harada K."/>
            <person name="Kawano M."/>
            <person name="Minami N."/>
            <person name="Ido Y."/>
            <person name="Kuwahara K."/>
            <person name="Fujita A."/>
            <person name="Ozono M."/>
            <person name="Watanabe A."/>
            <person name="Yamada A."/>
            <person name="Terada H."/>
            <person name="Shinohara Y."/>
        </authorList>
    </citation>
    <scope>FUNCTION</scope>
    <scope>SUBCELLULAR LOCATION</scope>
    <scope>TOPOLOGY</scope>
    <scope>INTERACTION WITH MCU</scope>
    <scope>MUTAGENESIS OF PRO-60 AND 85-SER--ALA-90</scope>
</reference>
<proteinExistence type="evidence at protein level"/>
<dbReference type="EMBL" id="AK005345">
    <property type="protein sequence ID" value="BAB23967.1"/>
    <property type="molecule type" value="mRNA"/>
</dbReference>
<dbReference type="EMBL" id="AK170899">
    <property type="protein sequence ID" value="BAE42102.1"/>
    <property type="molecule type" value="mRNA"/>
</dbReference>
<dbReference type="EMBL" id="BC028457">
    <property type="protein sequence ID" value="AAH28457.1"/>
    <property type="molecule type" value="mRNA"/>
</dbReference>
<dbReference type="EMBL" id="BC092006">
    <property type="protein sequence ID" value="AAH92006.1"/>
    <property type="status" value="ALT_FRAME"/>
    <property type="molecule type" value="mRNA"/>
</dbReference>
<dbReference type="CCDS" id="CCDS27688.1"/>
<dbReference type="RefSeq" id="NP_081190.1">
    <property type="nucleotide sequence ID" value="NM_026914.1"/>
</dbReference>
<dbReference type="RefSeq" id="XP_036015460.1">
    <property type="nucleotide sequence ID" value="XM_036159567.1"/>
</dbReference>
<dbReference type="SMR" id="Q9DB10"/>
<dbReference type="FunCoup" id="Q9DB10">
    <property type="interactions" value="968"/>
</dbReference>
<dbReference type="STRING" id="10090.ENSMUSP00000023086"/>
<dbReference type="PaxDb" id="10090-ENSMUSP00000023086"/>
<dbReference type="PeptideAtlas" id="Q9DB10"/>
<dbReference type="ProteomicsDB" id="275862"/>
<dbReference type="Pumba" id="Q9DB10"/>
<dbReference type="Antibodypedia" id="27229">
    <property type="antibodies" value="15 antibodies from 7 providers"/>
</dbReference>
<dbReference type="DNASU" id="69029"/>
<dbReference type="Ensembl" id="ENSMUST00000023086.15">
    <property type="protein sequence ID" value="ENSMUSP00000023086.9"/>
    <property type="gene ID" value="ENSMUSG00000022452.17"/>
</dbReference>
<dbReference type="GeneID" id="69029"/>
<dbReference type="KEGG" id="mmu:69029"/>
<dbReference type="UCSC" id="uc007wzb.1">
    <property type="organism name" value="mouse"/>
</dbReference>
<dbReference type="AGR" id="MGI:1916279"/>
<dbReference type="CTD" id="91689"/>
<dbReference type="MGI" id="MGI:1916279">
    <property type="gene designation" value="Smdt1"/>
</dbReference>
<dbReference type="VEuPathDB" id="HostDB:ENSMUSG00000022452"/>
<dbReference type="eggNOG" id="KOG4542">
    <property type="taxonomic scope" value="Eukaryota"/>
</dbReference>
<dbReference type="GeneTree" id="ENSGT00390000017489"/>
<dbReference type="HOGENOM" id="CLU_172921_1_0_1"/>
<dbReference type="InParanoid" id="Q9DB10"/>
<dbReference type="OrthoDB" id="10039145at2759"/>
<dbReference type="PhylomeDB" id="Q9DB10"/>
<dbReference type="TreeFam" id="TF314649"/>
<dbReference type="Reactome" id="R-MMU-8949215">
    <property type="pathway name" value="Mitochondrial calcium ion transport"/>
</dbReference>
<dbReference type="Reactome" id="R-MMU-8949664">
    <property type="pathway name" value="Processing of SMDT1"/>
</dbReference>
<dbReference type="Reactome" id="R-MMU-9837999">
    <property type="pathway name" value="Mitochondrial protein degradation"/>
</dbReference>
<dbReference type="BioGRID-ORCS" id="69029">
    <property type="hits" value="1 hit in 76 CRISPR screens"/>
</dbReference>
<dbReference type="ChiTaRS" id="Smdt1">
    <property type="organism name" value="mouse"/>
</dbReference>
<dbReference type="PRO" id="PR:Q9DB10"/>
<dbReference type="Proteomes" id="UP000000589">
    <property type="component" value="Chromosome 15"/>
</dbReference>
<dbReference type="RNAct" id="Q9DB10">
    <property type="molecule type" value="protein"/>
</dbReference>
<dbReference type="Bgee" id="ENSMUSG00000022452">
    <property type="expression patterns" value="Expressed in embryonic brain and 275 other cell types or tissues"/>
</dbReference>
<dbReference type="ExpressionAtlas" id="Q9DB10">
    <property type="expression patterns" value="baseline and differential"/>
</dbReference>
<dbReference type="GO" id="GO:0005743">
    <property type="term" value="C:mitochondrial inner membrane"/>
    <property type="evidence" value="ECO:0000250"/>
    <property type="project" value="UniProtKB"/>
</dbReference>
<dbReference type="GO" id="GO:0005739">
    <property type="term" value="C:mitochondrion"/>
    <property type="evidence" value="ECO:0007005"/>
    <property type="project" value="MGI"/>
</dbReference>
<dbReference type="GO" id="GO:0005654">
    <property type="term" value="C:nucleoplasm"/>
    <property type="evidence" value="ECO:0007669"/>
    <property type="project" value="Ensembl"/>
</dbReference>
<dbReference type="GO" id="GO:1990246">
    <property type="term" value="C:uniplex complex"/>
    <property type="evidence" value="ECO:0000250"/>
    <property type="project" value="UniProtKB"/>
</dbReference>
<dbReference type="GO" id="GO:0099103">
    <property type="term" value="F:channel activator activity"/>
    <property type="evidence" value="ECO:0000250"/>
    <property type="project" value="UniProtKB"/>
</dbReference>
<dbReference type="GO" id="GO:0030674">
    <property type="term" value="F:protein-macromolecule adaptor activity"/>
    <property type="evidence" value="ECO:0000250"/>
    <property type="project" value="UniProtKB"/>
</dbReference>
<dbReference type="GO" id="GO:0036444">
    <property type="term" value="P:calcium import into the mitochondrion"/>
    <property type="evidence" value="ECO:0000250"/>
    <property type="project" value="UniProtKB"/>
</dbReference>
<dbReference type="GO" id="GO:0072732">
    <property type="term" value="P:cellular response to calcium ion starvation"/>
    <property type="evidence" value="ECO:0007669"/>
    <property type="project" value="Ensembl"/>
</dbReference>
<dbReference type="GO" id="GO:0051560">
    <property type="term" value="P:mitochondrial calcium ion homeostasis"/>
    <property type="evidence" value="ECO:0000250"/>
    <property type="project" value="UniProtKB"/>
</dbReference>
<dbReference type="GO" id="GO:0006851">
    <property type="term" value="P:mitochondrial calcium ion transmembrane transport"/>
    <property type="evidence" value="ECO:0000250"/>
    <property type="project" value="UniProtKB"/>
</dbReference>
<dbReference type="InterPro" id="IPR018782">
    <property type="entry name" value="MCU_reg"/>
</dbReference>
<dbReference type="PANTHER" id="PTHR33904">
    <property type="entry name" value="ESSENTIAL MCU REGULATOR, MITOCHONDRIAL"/>
    <property type="match status" value="1"/>
</dbReference>
<dbReference type="PANTHER" id="PTHR33904:SF1">
    <property type="entry name" value="ESSENTIAL MCU REGULATOR, MITOCHONDRIAL"/>
    <property type="match status" value="1"/>
</dbReference>
<dbReference type="Pfam" id="PF10161">
    <property type="entry name" value="DDDD"/>
    <property type="match status" value="1"/>
</dbReference>
<organism>
    <name type="scientific">Mus musculus</name>
    <name type="common">Mouse</name>
    <dbReference type="NCBI Taxonomy" id="10090"/>
    <lineage>
        <taxon>Eukaryota</taxon>
        <taxon>Metazoa</taxon>
        <taxon>Chordata</taxon>
        <taxon>Craniata</taxon>
        <taxon>Vertebrata</taxon>
        <taxon>Euteleostomi</taxon>
        <taxon>Mammalia</taxon>
        <taxon>Eutheria</taxon>
        <taxon>Euarchontoglires</taxon>
        <taxon>Glires</taxon>
        <taxon>Rodentia</taxon>
        <taxon>Myomorpha</taxon>
        <taxon>Muroidea</taxon>
        <taxon>Muridae</taxon>
        <taxon>Murinae</taxon>
        <taxon>Mus</taxon>
        <taxon>Mus</taxon>
    </lineage>
</organism>
<name>EMRE_MOUSE</name>
<sequence length="107" mass="11542">MASTAARRLAWVAVRPGALWSGPRGRRGGDVYTVPGSSGLSQVPSRSVIVTRSGAILPKPVKMSFGLLRVFSIVIPFLYVGTLISKNFAALLEEHDIFVPEDDDDDD</sequence>